<dbReference type="EMBL" id="CP000266">
    <property type="protein sequence ID" value="ABF04272.1"/>
    <property type="molecule type" value="Genomic_DNA"/>
</dbReference>
<dbReference type="RefSeq" id="WP_000853873.1">
    <property type="nucleotide sequence ID" value="NC_008258.1"/>
</dbReference>
<dbReference type="SMR" id="Q0T343"/>
<dbReference type="KEGG" id="sfv:SFV_2150"/>
<dbReference type="HOGENOM" id="CLU_053334_0_0_6"/>
<dbReference type="UniPathway" id="UPA00704">
    <property type="reaction ID" value="UER00716"/>
</dbReference>
<dbReference type="Proteomes" id="UP000000659">
    <property type="component" value="Chromosome"/>
</dbReference>
<dbReference type="GO" id="GO:0005886">
    <property type="term" value="C:plasma membrane"/>
    <property type="evidence" value="ECO:0007669"/>
    <property type="project" value="TreeGrafter"/>
</dbReference>
<dbReference type="GO" id="GO:2001059">
    <property type="term" value="P:D-tagatose 6-phosphate catabolic process"/>
    <property type="evidence" value="ECO:0007669"/>
    <property type="project" value="UniProtKB-UniRule"/>
</dbReference>
<dbReference type="GO" id="GO:0019402">
    <property type="term" value="P:galactitol metabolic process"/>
    <property type="evidence" value="ECO:0007669"/>
    <property type="project" value="UniProtKB-KW"/>
</dbReference>
<dbReference type="GO" id="GO:0009401">
    <property type="term" value="P:phosphoenolpyruvate-dependent sugar phosphotransferase system"/>
    <property type="evidence" value="ECO:0007669"/>
    <property type="project" value="TreeGrafter"/>
</dbReference>
<dbReference type="FunFam" id="3.20.20.70:FF:000141">
    <property type="entry name" value="D-tagatose-1,6-bisphosphate aldolase subunit GatZ"/>
    <property type="match status" value="1"/>
</dbReference>
<dbReference type="Gene3D" id="3.20.20.70">
    <property type="entry name" value="Aldolase class I"/>
    <property type="match status" value="1"/>
</dbReference>
<dbReference type="Gene3D" id="1.10.400.20">
    <property type="entry name" value="putative tagatose 6-phosphate kinase domain like"/>
    <property type="match status" value="1"/>
</dbReference>
<dbReference type="HAMAP" id="MF_01296">
    <property type="entry name" value="Tagatose_aldol_GatZ"/>
    <property type="match status" value="1"/>
</dbReference>
<dbReference type="InterPro" id="IPR013785">
    <property type="entry name" value="Aldolase_TIM"/>
</dbReference>
<dbReference type="InterPro" id="IPR012062">
    <property type="entry name" value="GatZ/KbaZ-like"/>
</dbReference>
<dbReference type="InterPro" id="IPR050303">
    <property type="entry name" value="GatZ_KbaZ_carbometab"/>
</dbReference>
<dbReference type="InterPro" id="IPR023436">
    <property type="entry name" value="TagBP_ald_GatZ"/>
</dbReference>
<dbReference type="NCBIfam" id="TIGR02810">
    <property type="entry name" value="agaZ_gatZ"/>
    <property type="match status" value="1"/>
</dbReference>
<dbReference type="NCBIfam" id="NF011626">
    <property type="entry name" value="PRK15052.1"/>
    <property type="match status" value="1"/>
</dbReference>
<dbReference type="PANTHER" id="PTHR32502:SF12">
    <property type="entry name" value="D-TAGATOSE-1,6-BISPHOSPHATE ALDOLASE SUBUNIT GATZ"/>
    <property type="match status" value="1"/>
</dbReference>
<dbReference type="PANTHER" id="PTHR32502">
    <property type="entry name" value="N-ACETYLGALACTOSAMINE PERMEASE II COMPONENT-RELATED"/>
    <property type="match status" value="1"/>
</dbReference>
<dbReference type="Pfam" id="PF08013">
    <property type="entry name" value="GatZ_KbaZ-like"/>
    <property type="match status" value="1"/>
</dbReference>
<dbReference type="PIRSF" id="PIRSF009264">
    <property type="entry name" value="TagBP_ald_AgaZ"/>
    <property type="match status" value="1"/>
</dbReference>
<dbReference type="SUPFAM" id="SSF51569">
    <property type="entry name" value="Aldolase"/>
    <property type="match status" value="1"/>
</dbReference>
<proteinExistence type="inferred from homology"/>
<evidence type="ECO:0000255" key="1">
    <source>
        <dbReference type="HAMAP-Rule" id="MF_01296"/>
    </source>
</evidence>
<feature type="chain" id="PRO_0000372521" description="D-tagatose-1,6-bisphosphate aldolase subunit GatZ">
    <location>
        <begin position="1"/>
        <end position="420"/>
    </location>
</feature>
<protein>
    <recommendedName>
        <fullName evidence="1">D-tagatose-1,6-bisphosphate aldolase subunit GatZ</fullName>
    </recommendedName>
</protein>
<organism>
    <name type="scientific">Shigella flexneri serotype 5b (strain 8401)</name>
    <dbReference type="NCBI Taxonomy" id="373384"/>
    <lineage>
        <taxon>Bacteria</taxon>
        <taxon>Pseudomonadati</taxon>
        <taxon>Pseudomonadota</taxon>
        <taxon>Gammaproteobacteria</taxon>
        <taxon>Enterobacterales</taxon>
        <taxon>Enterobacteriaceae</taxon>
        <taxon>Shigella</taxon>
    </lineage>
</organism>
<keyword id="KW-0298">Galactitol metabolism</keyword>
<name>GATZ_SHIF8</name>
<comment type="function">
    <text evidence="1">Component of the tagatose-1,6-bisphosphate aldolase GatYZ that is required for full activity and stability of the Y subunit. Could have a chaperone-like function for the proper and stable folding of GatY. When expressed alone, GatZ does not show any aldolase activity. Is involved in the catabolism of galactitol.</text>
</comment>
<comment type="pathway">
    <text evidence="1">Carbohydrate metabolism; D-tagatose 6-phosphate degradation; D-glyceraldehyde 3-phosphate and glycerone phosphate from D-tagatose 6-phosphate: step 2/2.</text>
</comment>
<comment type="subunit">
    <text evidence="1">Forms a complex with GatY.</text>
</comment>
<comment type="similarity">
    <text evidence="1">Belongs to the GatZ/KbaZ family. GatZ subfamily.</text>
</comment>
<sequence>MKTLIARHKAGEHIGICSVCSAHPLVIEAALAFDRNSTRKVLIEATSNQVNQFGGYTGMTPADFREFVFTIADKVGFARERIILGGDHLGPNCWQQENADAAMEKSVELVKAYVRAGFSKIHLDASMSCAGDTIPLAPETVAERAAVLCFAAESVATDCQREQLSYVIGTEVPVPGGEASAIQSVHITHVEDAANTLRTHQKAFIARGLTEALTRVIAIVVQPGVEFDHSNIIHYQPQEAQALAQWIENTRMVYEAHSTDYQTRTAYWELVRDHFAILKVGPALTFALREAIFALAQIEQELIAPENRSGCLAVIEEVMLDEPQYWKKYYRTGFNDSLLDIRYSLSDRIRYYWPHSRIKNSVETMMVNLQGVDIPLGMISQYLPKQFERIQSGELSAMPHQLIMNKIYDVLRAYRYGCAE</sequence>
<gene>
    <name evidence="1" type="primary">gatZ</name>
    <name type="ordered locus">SFV_2150</name>
</gene>
<accession>Q0T343</accession>
<reference key="1">
    <citation type="journal article" date="2006" name="BMC Genomics">
        <title>Complete genome sequence of Shigella flexneri 5b and comparison with Shigella flexneri 2a.</title>
        <authorList>
            <person name="Nie H."/>
            <person name="Yang F."/>
            <person name="Zhang X."/>
            <person name="Yang J."/>
            <person name="Chen L."/>
            <person name="Wang J."/>
            <person name="Xiong Z."/>
            <person name="Peng J."/>
            <person name="Sun L."/>
            <person name="Dong J."/>
            <person name="Xue Y."/>
            <person name="Xu X."/>
            <person name="Chen S."/>
            <person name="Yao Z."/>
            <person name="Shen Y."/>
            <person name="Jin Q."/>
        </authorList>
    </citation>
    <scope>NUCLEOTIDE SEQUENCE [LARGE SCALE GENOMIC DNA]</scope>
    <source>
        <strain>8401</strain>
    </source>
</reference>